<accession>O81851</accession>
<accession>Q8W4E8</accession>
<reference key="1">
    <citation type="journal article" date="1999" name="Nature">
        <title>Sequence and analysis of chromosome 4 of the plant Arabidopsis thaliana.</title>
        <authorList>
            <person name="Mayer K.F.X."/>
            <person name="Schueller C."/>
            <person name="Wambutt R."/>
            <person name="Murphy G."/>
            <person name="Volckaert G."/>
            <person name="Pohl T."/>
            <person name="Duesterhoeft A."/>
            <person name="Stiekema W."/>
            <person name="Entian K.-D."/>
            <person name="Terryn N."/>
            <person name="Harris B."/>
            <person name="Ansorge W."/>
            <person name="Brandt P."/>
            <person name="Grivell L.A."/>
            <person name="Rieger M."/>
            <person name="Weichselgartner M."/>
            <person name="de Simone V."/>
            <person name="Obermaier B."/>
            <person name="Mache R."/>
            <person name="Mueller M."/>
            <person name="Kreis M."/>
            <person name="Delseny M."/>
            <person name="Puigdomenech P."/>
            <person name="Watson M."/>
            <person name="Schmidtheini T."/>
            <person name="Reichert B."/>
            <person name="Portetelle D."/>
            <person name="Perez-Alonso M."/>
            <person name="Boutry M."/>
            <person name="Bancroft I."/>
            <person name="Vos P."/>
            <person name="Hoheisel J."/>
            <person name="Zimmermann W."/>
            <person name="Wedler H."/>
            <person name="Ridley P."/>
            <person name="Langham S.-A."/>
            <person name="McCullagh B."/>
            <person name="Bilham L."/>
            <person name="Robben J."/>
            <person name="van der Schueren J."/>
            <person name="Grymonprez B."/>
            <person name="Chuang Y.-J."/>
            <person name="Vandenbussche F."/>
            <person name="Braeken M."/>
            <person name="Weltjens I."/>
            <person name="Voet M."/>
            <person name="Bastiaens I."/>
            <person name="Aert R."/>
            <person name="Defoor E."/>
            <person name="Weitzenegger T."/>
            <person name="Bothe G."/>
            <person name="Ramsperger U."/>
            <person name="Hilbert H."/>
            <person name="Braun M."/>
            <person name="Holzer E."/>
            <person name="Brandt A."/>
            <person name="Peters S."/>
            <person name="van Staveren M."/>
            <person name="Dirkse W."/>
            <person name="Mooijman P."/>
            <person name="Klein Lankhorst R."/>
            <person name="Rose M."/>
            <person name="Hauf J."/>
            <person name="Koetter P."/>
            <person name="Berneiser S."/>
            <person name="Hempel S."/>
            <person name="Feldpausch M."/>
            <person name="Lamberth S."/>
            <person name="Van den Daele H."/>
            <person name="De Keyser A."/>
            <person name="Buysshaert C."/>
            <person name="Gielen J."/>
            <person name="Villarroel R."/>
            <person name="De Clercq R."/>
            <person name="van Montagu M."/>
            <person name="Rogers J."/>
            <person name="Cronin A."/>
            <person name="Quail M.A."/>
            <person name="Bray-Allen S."/>
            <person name="Clark L."/>
            <person name="Doggett J."/>
            <person name="Hall S."/>
            <person name="Kay M."/>
            <person name="Lennard N."/>
            <person name="McLay K."/>
            <person name="Mayes R."/>
            <person name="Pettett A."/>
            <person name="Rajandream M.A."/>
            <person name="Lyne M."/>
            <person name="Benes V."/>
            <person name="Rechmann S."/>
            <person name="Borkova D."/>
            <person name="Bloecker H."/>
            <person name="Scharfe M."/>
            <person name="Grimm M."/>
            <person name="Loehnert T.-H."/>
            <person name="Dose S."/>
            <person name="de Haan M."/>
            <person name="Maarse A.C."/>
            <person name="Schaefer M."/>
            <person name="Mueller-Auer S."/>
            <person name="Gabel C."/>
            <person name="Fuchs M."/>
            <person name="Fartmann B."/>
            <person name="Granderath K."/>
            <person name="Dauner D."/>
            <person name="Herzl A."/>
            <person name="Neumann S."/>
            <person name="Argiriou A."/>
            <person name="Vitale D."/>
            <person name="Liguori R."/>
            <person name="Piravandi E."/>
            <person name="Massenet O."/>
            <person name="Quigley F."/>
            <person name="Clabauld G."/>
            <person name="Muendlein A."/>
            <person name="Felber R."/>
            <person name="Schnabl S."/>
            <person name="Hiller R."/>
            <person name="Schmidt W."/>
            <person name="Lecharny A."/>
            <person name="Aubourg S."/>
            <person name="Chefdor F."/>
            <person name="Cooke R."/>
            <person name="Berger C."/>
            <person name="Monfort A."/>
            <person name="Casacuberta E."/>
            <person name="Gibbons T."/>
            <person name="Weber N."/>
            <person name="Vandenbol M."/>
            <person name="Bargues M."/>
            <person name="Terol J."/>
            <person name="Torres A."/>
            <person name="Perez-Perez A."/>
            <person name="Purnelle B."/>
            <person name="Bent E."/>
            <person name="Johnson S."/>
            <person name="Tacon D."/>
            <person name="Jesse T."/>
            <person name="Heijnen L."/>
            <person name="Schwarz S."/>
            <person name="Scholler P."/>
            <person name="Heber S."/>
            <person name="Francs P."/>
            <person name="Bielke C."/>
            <person name="Frishman D."/>
            <person name="Haase D."/>
            <person name="Lemcke K."/>
            <person name="Mewes H.-W."/>
            <person name="Stocker S."/>
            <person name="Zaccaria P."/>
            <person name="Bevan M."/>
            <person name="Wilson R.K."/>
            <person name="de la Bastide M."/>
            <person name="Habermann K."/>
            <person name="Parnell L."/>
            <person name="Dedhia N."/>
            <person name="Gnoj L."/>
            <person name="Schutz K."/>
            <person name="Huang E."/>
            <person name="Spiegel L."/>
            <person name="Sekhon M."/>
            <person name="Murray J."/>
            <person name="Sheet P."/>
            <person name="Cordes M."/>
            <person name="Abu-Threideh J."/>
            <person name="Stoneking T."/>
            <person name="Kalicki J."/>
            <person name="Graves T."/>
            <person name="Harmon G."/>
            <person name="Edwards J."/>
            <person name="Latreille P."/>
            <person name="Courtney L."/>
            <person name="Cloud J."/>
            <person name="Abbott A."/>
            <person name="Scott K."/>
            <person name="Johnson D."/>
            <person name="Minx P."/>
            <person name="Bentley D."/>
            <person name="Fulton B."/>
            <person name="Miller N."/>
            <person name="Greco T."/>
            <person name="Kemp K."/>
            <person name="Kramer J."/>
            <person name="Fulton L."/>
            <person name="Mardis E."/>
            <person name="Dante M."/>
            <person name="Pepin K."/>
            <person name="Hillier L.W."/>
            <person name="Nelson J."/>
            <person name="Spieth J."/>
            <person name="Ryan E."/>
            <person name="Andrews S."/>
            <person name="Geisel C."/>
            <person name="Layman D."/>
            <person name="Du H."/>
            <person name="Ali J."/>
            <person name="Berghoff A."/>
            <person name="Jones K."/>
            <person name="Drone K."/>
            <person name="Cotton M."/>
            <person name="Joshu C."/>
            <person name="Antonoiu B."/>
            <person name="Zidanic M."/>
            <person name="Strong C."/>
            <person name="Sun H."/>
            <person name="Lamar B."/>
            <person name="Yordan C."/>
            <person name="Ma P."/>
            <person name="Zhong J."/>
            <person name="Preston R."/>
            <person name="Vil D."/>
            <person name="Shekher M."/>
            <person name="Matero A."/>
            <person name="Shah R."/>
            <person name="Swaby I.K."/>
            <person name="O'Shaughnessy A."/>
            <person name="Rodriguez M."/>
            <person name="Hoffman J."/>
            <person name="Till S."/>
            <person name="Granat S."/>
            <person name="Shohdy N."/>
            <person name="Hasegawa A."/>
            <person name="Hameed A."/>
            <person name="Lodhi M."/>
            <person name="Johnson A."/>
            <person name="Chen E."/>
            <person name="Marra M.A."/>
            <person name="Martienssen R."/>
            <person name="McCombie W.R."/>
        </authorList>
    </citation>
    <scope>NUCLEOTIDE SEQUENCE [LARGE SCALE GENOMIC DNA]</scope>
    <source>
        <strain>cv. Columbia</strain>
    </source>
</reference>
<reference key="2">
    <citation type="journal article" date="2017" name="Plant J.">
        <title>Araport11: a complete reannotation of the Arabidopsis thaliana reference genome.</title>
        <authorList>
            <person name="Cheng C.Y."/>
            <person name="Krishnakumar V."/>
            <person name="Chan A.P."/>
            <person name="Thibaud-Nissen F."/>
            <person name="Schobel S."/>
            <person name="Town C.D."/>
        </authorList>
    </citation>
    <scope>GENOME REANNOTATION</scope>
    <source>
        <strain>cv. Columbia</strain>
    </source>
</reference>
<reference key="3">
    <citation type="journal article" date="2003" name="Science">
        <title>Empirical analysis of transcriptional activity in the Arabidopsis genome.</title>
        <authorList>
            <person name="Yamada K."/>
            <person name="Lim J."/>
            <person name="Dale J.M."/>
            <person name="Chen H."/>
            <person name="Shinn P."/>
            <person name="Palm C.J."/>
            <person name="Southwick A.M."/>
            <person name="Wu H.C."/>
            <person name="Kim C.J."/>
            <person name="Nguyen M."/>
            <person name="Pham P.K."/>
            <person name="Cheuk R.F."/>
            <person name="Karlin-Newmann G."/>
            <person name="Liu S.X."/>
            <person name="Lam B."/>
            <person name="Sakano H."/>
            <person name="Wu T."/>
            <person name="Yu G."/>
            <person name="Miranda M."/>
            <person name="Quach H.L."/>
            <person name="Tripp M."/>
            <person name="Chang C.H."/>
            <person name="Lee J.M."/>
            <person name="Toriumi M.J."/>
            <person name="Chan M.M."/>
            <person name="Tang C.C."/>
            <person name="Onodera C.S."/>
            <person name="Deng J.M."/>
            <person name="Akiyama K."/>
            <person name="Ansari Y."/>
            <person name="Arakawa T."/>
            <person name="Banh J."/>
            <person name="Banno F."/>
            <person name="Bowser L."/>
            <person name="Brooks S.Y."/>
            <person name="Carninci P."/>
            <person name="Chao Q."/>
            <person name="Choy N."/>
            <person name="Enju A."/>
            <person name="Goldsmith A.D."/>
            <person name="Gurjal M."/>
            <person name="Hansen N.F."/>
            <person name="Hayashizaki Y."/>
            <person name="Johnson-Hopson C."/>
            <person name="Hsuan V.W."/>
            <person name="Iida K."/>
            <person name="Karnes M."/>
            <person name="Khan S."/>
            <person name="Koesema E."/>
            <person name="Ishida J."/>
            <person name="Jiang P.X."/>
            <person name="Jones T."/>
            <person name="Kawai J."/>
            <person name="Kamiya A."/>
            <person name="Meyers C."/>
            <person name="Nakajima M."/>
            <person name="Narusaka M."/>
            <person name="Seki M."/>
            <person name="Sakurai T."/>
            <person name="Satou M."/>
            <person name="Tamse R."/>
            <person name="Vaysberg M."/>
            <person name="Wallender E.K."/>
            <person name="Wong C."/>
            <person name="Yamamura Y."/>
            <person name="Yuan S."/>
            <person name="Shinozaki K."/>
            <person name="Davis R.W."/>
            <person name="Theologis A."/>
            <person name="Ecker J.R."/>
        </authorList>
    </citation>
    <scope>NUCLEOTIDE SEQUENCE [LARGE SCALE MRNA]</scope>
    <source>
        <strain>cv. Columbia</strain>
    </source>
</reference>
<reference key="4">
    <citation type="journal article" date="2010" name="Plant Physiol.">
        <title>The Arabidopsis Botrytis Susceptible1 Interactor defines a subclass of RING E3 ligases that regulate pathogen and stress responses.</title>
        <authorList>
            <person name="Luo H."/>
            <person name="Laluk K."/>
            <person name="Lai Z."/>
            <person name="Veronese P."/>
            <person name="Song F."/>
            <person name="Mengiste T."/>
        </authorList>
    </citation>
    <scope>FUNCTION</scope>
    <scope>CATALYTIC ACTIVITY</scope>
    <scope>INTERACTION WITH MYB108/BOS1</scope>
    <scope>DOMAIN</scope>
    <scope>SUBCELLULAR LOCATION</scope>
    <scope>TISSUE SPECIFICITY</scope>
    <scope>INDUCTION BY PATHOGEN; METHYL VIOLAGEN; SALICYLIC ACID; GIBBERELLIC ACID; ACC; METHYL JASMONATE AND SALT</scope>
</reference>
<reference key="5">
    <citation type="journal article" date="2011" name="J. Biol. Chem.">
        <title>Inhibitor of apoptosis (IAP)-like protein lacks a baculovirus IAP repeat (BIR) domain and attenuates cell death in plant and animal systems.</title>
        <authorList>
            <person name="Kim W.Y."/>
            <person name="Lee S.Y."/>
            <person name="Jung Y.J."/>
            <person name="Chae H.B."/>
            <person name="Nawkar G.M."/>
            <person name="Shin M.R."/>
            <person name="Kim S.Y."/>
            <person name="Park J.H."/>
            <person name="Kang C.H."/>
            <person name="Chi Y.H."/>
            <person name="Ahn I.P."/>
            <person name="Yun D.J."/>
            <person name="Lee K.O."/>
            <person name="Kim Y.M."/>
            <person name="Kim M.G."/>
            <person name="Lee S.Y."/>
        </authorList>
    </citation>
    <scope>FUNCTION</scope>
    <scope>DOMAIN</scope>
    <scope>SUBCELLULAR LOCATION</scope>
</reference>
<reference key="6">
    <citation type="journal article" date="2013" name="Plant Cell">
        <title>DELLA proteins and their interacting RING Finger proteins repress gibberellin responses by binding to the promoters of a subset of gibberellin-responsive genes in Arabidopsis.</title>
        <authorList>
            <person name="Park J."/>
            <person name="Nguyen K.T."/>
            <person name="Park E."/>
            <person name="Jeon J.S."/>
            <person name="Choi G."/>
        </authorList>
    </citation>
    <scope>FUNCTION</scope>
    <scope>INTERACTION WITH GAI; RGA; RGL1; RGL2 AND RGL3</scope>
    <scope>DISRUPTION PHENOTYPE</scope>
</reference>
<proteinExistence type="evidence at protein level"/>
<comment type="function">
    <text evidence="3 4 5">E3 ubiquitin-protein ligase involved in the regulation of pathogen and abiotic stress responses by facilitating degradation of MYB108/BOI. Attenuates cell death by preventing caspase activation. Has no effect on the stability of the DELLA proteins. Not regulated by MYB108/BOI.</text>
</comment>
<comment type="catalytic activity">
    <reaction evidence="3">
        <text>S-ubiquitinyl-[E2 ubiquitin-conjugating enzyme]-L-cysteine + [acceptor protein]-L-lysine = [E2 ubiquitin-conjugating enzyme]-L-cysteine + N(6)-ubiquitinyl-[acceptor protein]-L-lysine.</text>
        <dbReference type="EC" id="2.3.2.27"/>
    </reaction>
</comment>
<comment type="pathway">
    <text>Protein degradation; proteasomal ubiquitin-dependent pathway.</text>
</comment>
<comment type="subunit">
    <text evidence="3 5">Interacts with MYB108/BOS1 and the DELLA proteins GAI, RGA, RGL1, RGL2 and RGL3.</text>
</comment>
<comment type="subcellular location">
    <subcellularLocation>
        <location evidence="3 4">Nucleus</location>
    </subcellularLocation>
</comment>
<comment type="tissue specificity">
    <text evidence="3">Expressed in leaves, siliques, roots, flowering tissues and stigma tips.</text>
</comment>
<comment type="induction">
    <text evidence="3">Up-regulated by pathogen, methyl violagen, salicylic acid, 1-aminocyclopropane-1-carboxylic acid (ACC) and salt. Down-regulated by methyl jasmonate and gibberellic acid.</text>
</comment>
<comment type="domain">
    <text evidence="4">The N-terminal domain (1-150) prevents cell death by suppressing caspase-like protease activation.</text>
</comment>
<comment type="domain">
    <text evidence="3">The WRD domain (178-214) is necessary for interaction with MYB108/BOS1.</text>
</comment>
<comment type="domain">
    <text evidence="3">The RING-type zinc finger domain mediates binding to an E2 ubiquitin-conjugating enzyme. It is required for the ubiquitination activity, but dispensable and not sufficient for interaction with MYB108/BOS1 (PubMed:20921156).</text>
</comment>
<comment type="disruption phenotype">
    <text evidence="5">No effect on germination. Boi, brg1, brg2 and brg3 quadruple mutant shows a higher GA signaling resulting in a higher seed germination in the presence of paclobutrazol, precocious juvenile-to-adult phase transition and early flowering.</text>
</comment>
<comment type="miscellaneous">
    <text evidence="7">Shares anti-apoptotic activity with IAP family proteins. However, it lacks the baculovirus IAP repeat (BIR) domain, which was shown to be essential for anti-apoptotic activity in other IAP family members (PubMed:21926169).</text>
</comment>
<gene>
    <name type="primary">BOI</name>
    <name type="synonym">ILP</name>
    <name type="ordered locus">At4g19700</name>
    <name type="ORF">T16H5.60</name>
</gene>
<keyword id="KW-0053">Apoptosis</keyword>
<keyword id="KW-0175">Coiled coil</keyword>
<keyword id="KW-0479">Metal-binding</keyword>
<keyword id="KW-0539">Nucleus</keyword>
<keyword id="KW-0611">Plant defense</keyword>
<keyword id="KW-1185">Reference proteome</keyword>
<keyword id="KW-0808">Transferase</keyword>
<keyword id="KW-0833">Ubl conjugation pathway</keyword>
<keyword id="KW-0862">Zinc</keyword>
<keyword id="KW-0863">Zinc-finger</keyword>
<feature type="chain" id="PRO_0000424716" description="E3 ubiquitin-protein ligase BOI">
    <location>
        <begin position="1"/>
        <end position="304"/>
    </location>
</feature>
<feature type="zinc finger region" description="RING-type" evidence="2">
    <location>
        <begin position="254"/>
        <end position="291"/>
    </location>
</feature>
<feature type="region of interest" description="WRD domain">
    <location>
        <begin position="178"/>
        <end position="214"/>
    </location>
</feature>
<feature type="coiled-coil region" evidence="1">
    <location>
        <begin position="197"/>
        <end position="220"/>
    </location>
</feature>
<feature type="sequence conflict" description="In Ref. 3; AAL32681/AAM47984." evidence="6" ref="3">
    <location>
        <position position="37"/>
    </location>
</feature>
<protein>
    <recommendedName>
        <fullName>E3 ubiquitin-protein ligase BOI</fullName>
        <ecNumber evidence="3">2.3.2.27</ecNumber>
    </recommendedName>
    <alternativeName>
        <fullName>Inhibitor of apoptosis (IAP)-like protein</fullName>
        <shortName>AtILP</shortName>
    </alternativeName>
    <alternativeName>
        <fullName>Protein BOTRYTIS SUSCEPTIBLE 1 INTERACTOR</fullName>
        <shortName>AtBOI</shortName>
    </alternativeName>
    <alternativeName>
        <fullName evidence="6">RING-type E3 ubiquitin transferase BOI</fullName>
    </alternativeName>
</protein>
<name>BOI_ARATH</name>
<organism>
    <name type="scientific">Arabidopsis thaliana</name>
    <name type="common">Mouse-ear cress</name>
    <dbReference type="NCBI Taxonomy" id="3702"/>
    <lineage>
        <taxon>Eukaryota</taxon>
        <taxon>Viridiplantae</taxon>
        <taxon>Streptophyta</taxon>
        <taxon>Embryophyta</taxon>
        <taxon>Tracheophyta</taxon>
        <taxon>Spermatophyta</taxon>
        <taxon>Magnoliopsida</taxon>
        <taxon>eudicotyledons</taxon>
        <taxon>Gunneridae</taxon>
        <taxon>Pentapetalae</taxon>
        <taxon>rosids</taxon>
        <taxon>malvids</taxon>
        <taxon>Brassicales</taxon>
        <taxon>Brassicaceae</taxon>
        <taxon>Camelineae</taxon>
        <taxon>Arabidopsis</taxon>
    </lineage>
</organism>
<sequence>MAVQAHHMNIFSQFISPNRDCVKFQENMNHGEFEFTGGEVPLITGESFAVEPLAAKANFNKAESGLSYNFTVPPLSTKRQRDFQFSDSNAPVKRRSVAFDSSSPSLINVELVSQIQNQQQSEIDRFVAQQTEKLRIEIEARQQTQTRMLASAVQNVIAKKLKEKDDEIVRIRNLNWVLQERVKSLYVENQIWRDIAQTNEANANTLRTNLDQVLAQLETFPTASAVVEDDAESSCGSCCGDGGGEAVTAVGGGCKRCGEREASVLVLPCRHLCLCTVCGGSALLRTCPVCDMVMNASVHVNMSS</sequence>
<dbReference type="EC" id="2.3.2.27" evidence="3"/>
<dbReference type="EMBL" id="AL024486">
    <property type="protein sequence ID" value="CAA19687.1"/>
    <property type="molecule type" value="Genomic_DNA"/>
</dbReference>
<dbReference type="EMBL" id="AL161551">
    <property type="protein sequence ID" value="CAB78972.1"/>
    <property type="molecule type" value="Genomic_DNA"/>
</dbReference>
<dbReference type="EMBL" id="CP002687">
    <property type="protein sequence ID" value="AEE84218.1"/>
    <property type="molecule type" value="Genomic_DNA"/>
</dbReference>
<dbReference type="EMBL" id="AY062603">
    <property type="protein sequence ID" value="AAL32681.1"/>
    <property type="molecule type" value="mRNA"/>
</dbReference>
<dbReference type="EMBL" id="AY114665">
    <property type="protein sequence ID" value="AAM47984.1"/>
    <property type="molecule type" value="mRNA"/>
</dbReference>
<dbReference type="PIR" id="T04751">
    <property type="entry name" value="T04751"/>
</dbReference>
<dbReference type="RefSeq" id="NP_193705.1">
    <property type="nucleotide sequence ID" value="NM_118090.4"/>
</dbReference>
<dbReference type="SMR" id="O81851"/>
<dbReference type="BioGRID" id="13007">
    <property type="interactions" value="43"/>
</dbReference>
<dbReference type="FunCoup" id="O81851">
    <property type="interactions" value="261"/>
</dbReference>
<dbReference type="IntAct" id="O81851">
    <property type="interactions" value="40"/>
</dbReference>
<dbReference type="STRING" id="3702.O81851"/>
<dbReference type="PaxDb" id="3702-AT4G19700.1"/>
<dbReference type="ProteomicsDB" id="240672"/>
<dbReference type="EnsemblPlants" id="AT4G19700.1">
    <property type="protein sequence ID" value="AT4G19700.1"/>
    <property type="gene ID" value="AT4G19700"/>
</dbReference>
<dbReference type="GeneID" id="827714"/>
<dbReference type="Gramene" id="AT4G19700.1">
    <property type="protein sequence ID" value="AT4G19700.1"/>
    <property type="gene ID" value="AT4G19700"/>
</dbReference>
<dbReference type="KEGG" id="ath:AT4G19700"/>
<dbReference type="Araport" id="AT4G19700"/>
<dbReference type="TAIR" id="AT4G19700">
    <property type="gene designation" value="RING"/>
</dbReference>
<dbReference type="eggNOG" id="KOG1100">
    <property type="taxonomic scope" value="Eukaryota"/>
</dbReference>
<dbReference type="HOGENOM" id="CLU_038018_3_1_1"/>
<dbReference type="InParanoid" id="O81851"/>
<dbReference type="OMA" id="NMNHGEF"/>
<dbReference type="PhylomeDB" id="O81851"/>
<dbReference type="UniPathway" id="UPA00144"/>
<dbReference type="PRO" id="PR:O81851"/>
<dbReference type="Proteomes" id="UP000006548">
    <property type="component" value="Chromosome 4"/>
</dbReference>
<dbReference type="ExpressionAtlas" id="O81851">
    <property type="expression patterns" value="baseline and differential"/>
</dbReference>
<dbReference type="GO" id="GO:0005634">
    <property type="term" value="C:nucleus"/>
    <property type="evidence" value="ECO:0000314"/>
    <property type="project" value="TAIR"/>
</dbReference>
<dbReference type="GO" id="GO:0004842">
    <property type="term" value="F:ubiquitin-protein transferase activity"/>
    <property type="evidence" value="ECO:0000314"/>
    <property type="project" value="TAIR"/>
</dbReference>
<dbReference type="GO" id="GO:0008270">
    <property type="term" value="F:zinc ion binding"/>
    <property type="evidence" value="ECO:0007669"/>
    <property type="project" value="UniProtKB-KW"/>
</dbReference>
<dbReference type="GO" id="GO:0042742">
    <property type="term" value="P:defense response to bacterium"/>
    <property type="evidence" value="ECO:0000315"/>
    <property type="project" value="TAIR"/>
</dbReference>
<dbReference type="GO" id="GO:0050832">
    <property type="term" value="P:defense response to fungus"/>
    <property type="evidence" value="ECO:0000315"/>
    <property type="project" value="TAIR"/>
</dbReference>
<dbReference type="GO" id="GO:0043069">
    <property type="term" value="P:negative regulation of programmed cell death"/>
    <property type="evidence" value="ECO:0000315"/>
    <property type="project" value="TAIR"/>
</dbReference>
<dbReference type="GO" id="GO:0043161">
    <property type="term" value="P:proteasome-mediated ubiquitin-dependent protein catabolic process"/>
    <property type="evidence" value="ECO:0007669"/>
    <property type="project" value="UniProtKB-UniPathway"/>
</dbReference>
<dbReference type="GO" id="GO:0009739">
    <property type="term" value="P:response to gibberellin"/>
    <property type="evidence" value="ECO:0000270"/>
    <property type="project" value="TAIR"/>
</dbReference>
<dbReference type="CDD" id="cd16649">
    <property type="entry name" value="mRING-HC-C3HC5_CGRF1-like"/>
    <property type="match status" value="1"/>
</dbReference>
<dbReference type="FunFam" id="3.30.40.10:FF:000917">
    <property type="entry name" value="E3 ubiquitin-protein ligase BOI"/>
    <property type="match status" value="1"/>
</dbReference>
<dbReference type="Gene3D" id="3.30.40.10">
    <property type="entry name" value="Zinc/RING finger domain, C3HC4 (zinc finger)"/>
    <property type="match status" value="1"/>
</dbReference>
<dbReference type="InterPro" id="IPR001841">
    <property type="entry name" value="Znf_RING"/>
</dbReference>
<dbReference type="InterPro" id="IPR013083">
    <property type="entry name" value="Znf_RING/FYVE/PHD"/>
</dbReference>
<dbReference type="PANTHER" id="PTHR42647:SF54">
    <property type="entry name" value="E3 UBIQUITIN-PROTEIN LIGASE BOI"/>
    <property type="match status" value="1"/>
</dbReference>
<dbReference type="PANTHER" id="PTHR42647">
    <property type="entry name" value="SBP (S-RIBONUCLEASE BINDING PROTEIN) FAMILY PROTEIN"/>
    <property type="match status" value="1"/>
</dbReference>
<dbReference type="Pfam" id="PF13920">
    <property type="entry name" value="zf-C3HC4_3"/>
    <property type="match status" value="1"/>
</dbReference>
<dbReference type="PIRSF" id="PIRSF036836">
    <property type="entry name" value="RNase_bind_SBP1"/>
    <property type="match status" value="1"/>
</dbReference>
<dbReference type="PROSITE" id="PS50089">
    <property type="entry name" value="ZF_RING_2"/>
    <property type="match status" value="1"/>
</dbReference>
<evidence type="ECO:0000255" key="1"/>
<evidence type="ECO:0000255" key="2">
    <source>
        <dbReference type="PROSITE-ProRule" id="PRU00175"/>
    </source>
</evidence>
<evidence type="ECO:0000269" key="3">
    <source>
    </source>
</evidence>
<evidence type="ECO:0000269" key="4">
    <source>
    </source>
</evidence>
<evidence type="ECO:0000269" key="5">
    <source>
    </source>
</evidence>
<evidence type="ECO:0000305" key="6"/>
<evidence type="ECO:0000305" key="7">
    <source>
    </source>
</evidence>